<gene>
    <name type="primary">copZb</name>
    <name type="ORF">DDB_G0293086</name>
</gene>
<comment type="function">
    <text evidence="2">The coatomer is a cytosolic protein complex that binds to dilysine motifs and reversibly associates with Golgi non-clathrin-coated vesicles, which further mediate biosynthetic protein transport from the ER, via the Golgi up to the trans Golgi network. Coatomer complex is required for budding from Golgi membranes, and is essential for the retrograde Golgi-to-ER transport of dilysine-tagged proteins (By similarity). The zeta subunit may be involved in regulating the coat assembly and, hence, the rate of biosynthetic protein transport due to its association-dissociation properties with the coatomer complex (By similarity).</text>
</comment>
<comment type="subunit">
    <text evidence="1">Oligomeric complex that consists of at least the alpha, beta, beta', gamma, delta, epsilon and zeta subunits.</text>
</comment>
<comment type="subcellular location">
    <subcellularLocation>
        <location evidence="1">Cytoplasm</location>
    </subcellularLocation>
    <subcellularLocation>
        <location evidence="1">Golgi apparatus membrane</location>
        <topology evidence="1">Peripheral membrane protein</topology>
        <orientation evidence="1">Cytoplasmic side</orientation>
    </subcellularLocation>
    <subcellularLocation>
        <location evidence="1">Cytoplasmic vesicle</location>
        <location evidence="1">COPI-coated vesicle membrane</location>
        <topology evidence="1">Peripheral membrane protein</topology>
        <orientation evidence="1">Cytoplasmic side</orientation>
    </subcellularLocation>
</comment>
<comment type="similarity">
    <text evidence="3">Belongs to the adaptor complexes small subunit family.</text>
</comment>
<proteinExistence type="inferred from homology"/>
<protein>
    <recommendedName>
        <fullName>Probable coatomer subunit zeta-B</fullName>
    </recommendedName>
    <alternativeName>
        <fullName>Zeta-B-coat protein</fullName>
        <shortName>Zeta-B COP</shortName>
    </alternativeName>
</protein>
<evidence type="ECO:0000250" key="1"/>
<evidence type="ECO:0000250" key="2">
    <source>
        <dbReference type="UniProtKB" id="P53600"/>
    </source>
</evidence>
<evidence type="ECO:0000305" key="3"/>
<feature type="chain" id="PRO_0000328106" description="Probable coatomer subunit zeta-B">
    <location>
        <begin position="1"/>
        <end position="178"/>
    </location>
</feature>
<keyword id="KW-0963">Cytoplasm</keyword>
<keyword id="KW-0968">Cytoplasmic vesicle</keyword>
<keyword id="KW-0931">ER-Golgi transport</keyword>
<keyword id="KW-0333">Golgi apparatus</keyword>
<keyword id="KW-0472">Membrane</keyword>
<keyword id="KW-0653">Protein transport</keyword>
<keyword id="KW-1185">Reference proteome</keyword>
<keyword id="KW-0813">Transport</keyword>
<reference key="1">
    <citation type="journal article" date="2005" name="Nature">
        <title>The genome of the social amoeba Dictyostelium discoideum.</title>
        <authorList>
            <person name="Eichinger L."/>
            <person name="Pachebat J.A."/>
            <person name="Gloeckner G."/>
            <person name="Rajandream M.A."/>
            <person name="Sucgang R."/>
            <person name="Berriman M."/>
            <person name="Song J."/>
            <person name="Olsen R."/>
            <person name="Szafranski K."/>
            <person name="Xu Q."/>
            <person name="Tunggal B."/>
            <person name="Kummerfeld S."/>
            <person name="Madera M."/>
            <person name="Konfortov B.A."/>
            <person name="Rivero F."/>
            <person name="Bankier A.T."/>
            <person name="Lehmann R."/>
            <person name="Hamlin N."/>
            <person name="Davies R."/>
            <person name="Gaudet P."/>
            <person name="Fey P."/>
            <person name="Pilcher K."/>
            <person name="Chen G."/>
            <person name="Saunders D."/>
            <person name="Sodergren E.J."/>
            <person name="Davis P."/>
            <person name="Kerhornou A."/>
            <person name="Nie X."/>
            <person name="Hall N."/>
            <person name="Anjard C."/>
            <person name="Hemphill L."/>
            <person name="Bason N."/>
            <person name="Farbrother P."/>
            <person name="Desany B."/>
            <person name="Just E."/>
            <person name="Morio T."/>
            <person name="Rost R."/>
            <person name="Churcher C.M."/>
            <person name="Cooper J."/>
            <person name="Haydock S."/>
            <person name="van Driessche N."/>
            <person name="Cronin A."/>
            <person name="Goodhead I."/>
            <person name="Muzny D.M."/>
            <person name="Mourier T."/>
            <person name="Pain A."/>
            <person name="Lu M."/>
            <person name="Harper D."/>
            <person name="Lindsay R."/>
            <person name="Hauser H."/>
            <person name="James K.D."/>
            <person name="Quiles M."/>
            <person name="Madan Babu M."/>
            <person name="Saito T."/>
            <person name="Buchrieser C."/>
            <person name="Wardroper A."/>
            <person name="Felder M."/>
            <person name="Thangavelu M."/>
            <person name="Johnson D."/>
            <person name="Knights A."/>
            <person name="Loulseged H."/>
            <person name="Mungall K.L."/>
            <person name="Oliver K."/>
            <person name="Price C."/>
            <person name="Quail M.A."/>
            <person name="Urushihara H."/>
            <person name="Hernandez J."/>
            <person name="Rabbinowitsch E."/>
            <person name="Steffen D."/>
            <person name="Sanders M."/>
            <person name="Ma J."/>
            <person name="Kohara Y."/>
            <person name="Sharp S."/>
            <person name="Simmonds M.N."/>
            <person name="Spiegler S."/>
            <person name="Tivey A."/>
            <person name="Sugano S."/>
            <person name="White B."/>
            <person name="Walker D."/>
            <person name="Woodward J.R."/>
            <person name="Winckler T."/>
            <person name="Tanaka Y."/>
            <person name="Shaulsky G."/>
            <person name="Schleicher M."/>
            <person name="Weinstock G.M."/>
            <person name="Rosenthal A."/>
            <person name="Cox E.C."/>
            <person name="Chisholm R.L."/>
            <person name="Gibbs R.A."/>
            <person name="Loomis W.F."/>
            <person name="Platzer M."/>
            <person name="Kay R.R."/>
            <person name="Williams J.G."/>
            <person name="Dear P.H."/>
            <person name="Noegel A.A."/>
            <person name="Barrell B.G."/>
            <person name="Kuspa A."/>
        </authorList>
    </citation>
    <scope>NUCLEOTIDE SEQUENCE [LARGE SCALE GENOMIC DNA]</scope>
    <source>
        <strain>AX4</strain>
    </source>
</reference>
<organism>
    <name type="scientific">Dictyostelium discoideum</name>
    <name type="common">Social amoeba</name>
    <dbReference type="NCBI Taxonomy" id="44689"/>
    <lineage>
        <taxon>Eukaryota</taxon>
        <taxon>Amoebozoa</taxon>
        <taxon>Evosea</taxon>
        <taxon>Eumycetozoa</taxon>
        <taxon>Dictyostelia</taxon>
        <taxon>Dictyosteliales</taxon>
        <taxon>Dictyosteliaceae</taxon>
        <taxon>Dictyostelium</taxon>
    </lineage>
</organism>
<sequence length="178" mass="19954">MDETVYQIKAIIVLDNNGKRLCSCFYDPPGTPITPLTEKDKFEKLIFEKCKTSNCELEIIDNKVVIGSKQSDVWIFVVGNSLNSNELALLDVLNTLISLFKKACATDESIMITKKTFLENYALIRLYIDEIVSDGIIFEVDEETILNRVPIADNAAQSLNEAIEMAKEKAKGFGFGFL</sequence>
<accession>Q54CA7</accession>
<name>COPZB_DICDI</name>
<dbReference type="EMBL" id="AAFI02000199">
    <property type="protein sequence ID" value="EAL60895.1"/>
    <property type="molecule type" value="Genomic_DNA"/>
</dbReference>
<dbReference type="RefSeq" id="XP_629312.1">
    <property type="nucleotide sequence ID" value="XM_629310.1"/>
</dbReference>
<dbReference type="SMR" id="Q54CA7"/>
<dbReference type="STRING" id="44689.Q54CA7"/>
<dbReference type="PaxDb" id="44689-DDB0305237"/>
<dbReference type="EnsemblProtists" id="EAL60895">
    <property type="protein sequence ID" value="EAL60895"/>
    <property type="gene ID" value="DDB_G0293086"/>
</dbReference>
<dbReference type="GeneID" id="8629035"/>
<dbReference type="KEGG" id="ddi:DDB_G0293086"/>
<dbReference type="dictyBase" id="DDB_G0293086">
    <property type="gene designation" value="copZb"/>
</dbReference>
<dbReference type="VEuPathDB" id="AmoebaDB:DDB_G0293086"/>
<dbReference type="eggNOG" id="KOG3343">
    <property type="taxonomic scope" value="Eukaryota"/>
</dbReference>
<dbReference type="HOGENOM" id="CLU_086803_0_0_1"/>
<dbReference type="InParanoid" id="Q54CA7"/>
<dbReference type="OMA" id="VATHTIC"/>
<dbReference type="PhylomeDB" id="Q54CA7"/>
<dbReference type="Reactome" id="R-DDI-6807878">
    <property type="pathway name" value="COPI-mediated anterograde transport"/>
</dbReference>
<dbReference type="Reactome" id="R-DDI-6811434">
    <property type="pathway name" value="COPI-dependent Golgi-to-ER retrograde traffic"/>
</dbReference>
<dbReference type="PRO" id="PR:Q54CA7"/>
<dbReference type="Proteomes" id="UP000002195">
    <property type="component" value="Chromosome 6"/>
</dbReference>
<dbReference type="GO" id="GO:0030126">
    <property type="term" value="C:COPI vesicle coat"/>
    <property type="evidence" value="ECO:0000250"/>
    <property type="project" value="UniProtKB"/>
</dbReference>
<dbReference type="GO" id="GO:0000139">
    <property type="term" value="C:Golgi membrane"/>
    <property type="evidence" value="ECO:0007669"/>
    <property type="project" value="UniProtKB-SubCell"/>
</dbReference>
<dbReference type="GO" id="GO:0006891">
    <property type="term" value="P:intra-Golgi vesicle-mediated transport"/>
    <property type="evidence" value="ECO:0000250"/>
    <property type="project" value="UniProtKB"/>
</dbReference>
<dbReference type="GO" id="GO:0006886">
    <property type="term" value="P:intracellular protein transport"/>
    <property type="evidence" value="ECO:0000318"/>
    <property type="project" value="GO_Central"/>
</dbReference>
<dbReference type="GO" id="GO:0006890">
    <property type="term" value="P:retrograde vesicle-mediated transport, Golgi to endoplasmic reticulum"/>
    <property type="evidence" value="ECO:0000318"/>
    <property type="project" value="GO_Central"/>
</dbReference>
<dbReference type="FunFam" id="3.30.450.60:FF:000036">
    <property type="entry name" value="Clathrin adaptor complex small chain subfamily protein"/>
    <property type="match status" value="1"/>
</dbReference>
<dbReference type="Gene3D" id="3.30.450.60">
    <property type="match status" value="1"/>
</dbReference>
<dbReference type="InterPro" id="IPR022775">
    <property type="entry name" value="AP_mu_sigma_su"/>
</dbReference>
<dbReference type="InterPro" id="IPR039652">
    <property type="entry name" value="Coatomer_zeta"/>
</dbReference>
<dbReference type="InterPro" id="IPR011012">
    <property type="entry name" value="Longin-like_dom_sf"/>
</dbReference>
<dbReference type="PANTHER" id="PTHR11043:SF0">
    <property type="entry name" value="COATOMER SUBUNIT ZETA"/>
    <property type="match status" value="1"/>
</dbReference>
<dbReference type="PANTHER" id="PTHR11043">
    <property type="entry name" value="ZETA-COAT PROTEIN"/>
    <property type="match status" value="1"/>
</dbReference>
<dbReference type="Pfam" id="PF01217">
    <property type="entry name" value="Clat_adaptor_s"/>
    <property type="match status" value="1"/>
</dbReference>
<dbReference type="SUPFAM" id="SSF64356">
    <property type="entry name" value="SNARE-like"/>
    <property type="match status" value="1"/>
</dbReference>